<name>VM11_BOTMO</name>
<comment type="function">
    <text evidence="2">Zinc metalloprotease that displays fibrinogenolytic, gelatinase and weak hemorrhagic activities (PubMed:32946987). Degrades the three chain of fibrinogen Aalpha-chain (FGA), Bbeta-chain (FGB), and gamma (FGG) (PubMed:32946987).</text>
</comment>
<comment type="cofactor">
    <cofactor evidence="2">
        <name>Zn(2+)</name>
        <dbReference type="ChEBI" id="CHEBI:29105"/>
    </cofactor>
    <text evidence="2">Binds 1 zinc ion per subunit.</text>
</comment>
<comment type="subunit">
    <text evidence="5">Monomer.</text>
</comment>
<comment type="subcellular location">
    <subcellularLocation>
        <location evidence="2">Secreted</location>
    </subcellularLocation>
</comment>
<comment type="tissue specificity">
    <text evidence="5">Expressed by the venom gland.</text>
</comment>
<comment type="similarity">
    <text evidence="4">Belongs to the venom metalloproteinase (M12B) family. P-I subfamily.</text>
</comment>
<organism>
    <name type="scientific">Bothrops moojeni</name>
    <name type="common">Lance-headed viper</name>
    <name type="synonym">Caissaca</name>
    <dbReference type="NCBI Taxonomy" id="98334"/>
    <lineage>
        <taxon>Eukaryota</taxon>
        <taxon>Metazoa</taxon>
        <taxon>Chordata</taxon>
        <taxon>Craniata</taxon>
        <taxon>Vertebrata</taxon>
        <taxon>Euteleostomi</taxon>
        <taxon>Lepidosauria</taxon>
        <taxon>Squamata</taxon>
        <taxon>Bifurcata</taxon>
        <taxon>Unidentata</taxon>
        <taxon>Episquamata</taxon>
        <taxon>Toxicofera</taxon>
        <taxon>Serpentes</taxon>
        <taxon>Colubroidea</taxon>
        <taxon>Viperidae</taxon>
        <taxon>Crotalinae</taxon>
        <taxon>Bothrops</taxon>
    </lineage>
</organism>
<reference key="1">
    <citation type="journal article" date="2020" name="Biochimie">
        <title>Biochemical, pharmacological and structural characterization of BmooMP-I, a new P-I metalloproteinase from Bothrops moojeni venom.</title>
        <authorList>
            <person name="Salvador G.H.M."/>
            <person name="Borges R.J."/>
            <person name="Eulalio M.M.C."/>
            <person name="Dos Santos L.D."/>
            <person name="Fontes M.R.M."/>
        </authorList>
    </citation>
    <scope>PROTEIN SEQUENCE</scope>
    <scope>X-RAY CRYSTALLOGRAPHY (1.92 ANGSTROMS) IN COMPLEX WITH ZINC ION</scope>
    <scope>FUNCTION</scope>
    <scope>SUBCELLULAR LOCATION</scope>
    <source>
        <tissue>Venom</tissue>
    </source>
</reference>
<sequence length="200" mass="22545">AFSPRYIELAVVADNGMFTKYNSNLNTIRTRVHEMVNTVNGFYSSVNANASLANLQVWSIKDLIKVEKDSNKTLTSFGEWRERDLLPRISHDHAQLLTTIVFDNYVIGRSRSGKMCDPEQSVGVVRDHSKNNLWVAVTMAHELGHNLDMHHDDTCSCGAKSCIMASVLSKTKSYAFSTCSQNEYQTFLTKHNPQCILNEP</sequence>
<proteinExistence type="evidence at protein level"/>
<protein>
    <recommendedName>
        <fullName evidence="3">Snake venom metalloproteinase BmooMP-I</fullName>
        <shortName>SVMP</shortName>
        <ecNumber>3.4.24.-</ecNumber>
    </recommendedName>
</protein>
<dbReference type="EC" id="3.4.24.-"/>
<dbReference type="PDB" id="6X5X">
    <property type="method" value="X-ray"/>
    <property type="resolution" value="1.92 A"/>
    <property type="chains" value="A=1-200"/>
</dbReference>
<dbReference type="PDBsum" id="6X5X"/>
<dbReference type="SMR" id="P0DQT6"/>
<dbReference type="GO" id="GO:0005576">
    <property type="term" value="C:extracellular region"/>
    <property type="evidence" value="ECO:0007669"/>
    <property type="project" value="UniProtKB-SubCell"/>
</dbReference>
<dbReference type="GO" id="GO:0005886">
    <property type="term" value="C:plasma membrane"/>
    <property type="evidence" value="ECO:0007669"/>
    <property type="project" value="TreeGrafter"/>
</dbReference>
<dbReference type="GO" id="GO:0046872">
    <property type="term" value="F:metal ion binding"/>
    <property type="evidence" value="ECO:0007669"/>
    <property type="project" value="UniProtKB-KW"/>
</dbReference>
<dbReference type="GO" id="GO:0004222">
    <property type="term" value="F:metalloendopeptidase activity"/>
    <property type="evidence" value="ECO:0007669"/>
    <property type="project" value="InterPro"/>
</dbReference>
<dbReference type="GO" id="GO:0006508">
    <property type="term" value="P:proteolysis"/>
    <property type="evidence" value="ECO:0007669"/>
    <property type="project" value="UniProtKB-KW"/>
</dbReference>
<dbReference type="CDD" id="cd04269">
    <property type="entry name" value="ZnMc_adamalysin_II_like"/>
    <property type="match status" value="1"/>
</dbReference>
<dbReference type="FunFam" id="3.40.390.10:FF:000002">
    <property type="entry name" value="Disintegrin and metalloproteinase domain-containing protein 22"/>
    <property type="match status" value="1"/>
</dbReference>
<dbReference type="Gene3D" id="3.40.390.10">
    <property type="entry name" value="Collagenase (Catalytic Domain)"/>
    <property type="match status" value="1"/>
</dbReference>
<dbReference type="InterPro" id="IPR024079">
    <property type="entry name" value="MetalloPept_cat_dom_sf"/>
</dbReference>
<dbReference type="InterPro" id="IPR001590">
    <property type="entry name" value="Peptidase_M12B"/>
</dbReference>
<dbReference type="InterPro" id="IPR034027">
    <property type="entry name" value="Reprolysin_adamalysin"/>
</dbReference>
<dbReference type="PANTHER" id="PTHR11905">
    <property type="entry name" value="ADAM A DISINTEGRIN AND METALLOPROTEASE DOMAIN"/>
    <property type="match status" value="1"/>
</dbReference>
<dbReference type="PANTHER" id="PTHR11905:SF32">
    <property type="entry name" value="DISINTEGRIN AND METALLOPROTEINASE DOMAIN-CONTAINING PROTEIN 28"/>
    <property type="match status" value="1"/>
</dbReference>
<dbReference type="Pfam" id="PF01421">
    <property type="entry name" value="Reprolysin"/>
    <property type="match status" value="1"/>
</dbReference>
<dbReference type="SUPFAM" id="SSF55486">
    <property type="entry name" value="Metalloproteases ('zincins'), catalytic domain"/>
    <property type="match status" value="1"/>
</dbReference>
<dbReference type="PROSITE" id="PS50215">
    <property type="entry name" value="ADAM_MEPRO"/>
    <property type="match status" value="1"/>
</dbReference>
<dbReference type="PROSITE" id="PS00142">
    <property type="entry name" value="ZINC_PROTEASE"/>
    <property type="match status" value="1"/>
</dbReference>
<feature type="chain" id="PRO_0000455524" description="Snake venom metalloproteinase BmooMP-I" evidence="2">
    <location>
        <begin position="1"/>
        <end position="200"/>
    </location>
</feature>
<feature type="domain" description="Peptidase M12B" evidence="1">
    <location>
        <begin position="5"/>
        <end position="200"/>
    </location>
</feature>
<feature type="active site" evidence="1">
    <location>
        <position position="142"/>
    </location>
</feature>
<feature type="binding site" evidence="2 6">
    <location>
        <position position="8"/>
    </location>
    <ligand>
        <name>Ca(2+)</name>
        <dbReference type="ChEBI" id="CHEBI:29108"/>
    </ligand>
</feature>
<feature type="binding site" evidence="2 6">
    <location>
        <position position="92"/>
    </location>
    <ligand>
        <name>Ca(2+)</name>
        <dbReference type="ChEBI" id="CHEBI:29108"/>
    </ligand>
</feature>
<feature type="binding site" evidence="2 6">
    <location>
        <position position="141"/>
    </location>
    <ligand>
        <name>Zn(2+)</name>
        <dbReference type="ChEBI" id="CHEBI:29105"/>
        <note>catalytic</note>
    </ligand>
</feature>
<feature type="binding site" evidence="2 6">
    <location>
        <position position="145"/>
    </location>
    <ligand>
        <name>Zn(2+)</name>
        <dbReference type="ChEBI" id="CHEBI:29105"/>
        <note>catalytic</note>
    </ligand>
</feature>
<feature type="binding site" evidence="2 6">
    <location>
        <position position="151"/>
    </location>
    <ligand>
        <name>Zn(2+)</name>
        <dbReference type="ChEBI" id="CHEBI:29105"/>
        <note>catalytic</note>
    </ligand>
</feature>
<feature type="binding site" evidence="2 6">
    <location>
        <position position="195"/>
    </location>
    <ligand>
        <name>Ca(2+)</name>
        <dbReference type="ChEBI" id="CHEBI:29108"/>
    </ligand>
</feature>
<feature type="binding site" evidence="2 6">
    <location>
        <position position="198"/>
    </location>
    <ligand>
        <name>Ca(2+)</name>
        <dbReference type="ChEBI" id="CHEBI:29108"/>
    </ligand>
</feature>
<feature type="disulfide bond" evidence="2 6">
    <location>
        <begin position="116"/>
        <end position="195"/>
    </location>
</feature>
<feature type="disulfide bond" evidence="2 6">
    <location>
        <begin position="155"/>
        <end position="179"/>
    </location>
</feature>
<feature type="disulfide bond" evidence="2 6">
    <location>
        <begin position="157"/>
        <end position="162"/>
    </location>
</feature>
<feature type="unsure residue" description="A OR T" evidence="5">
    <location>
        <position position="1"/>
    </location>
</feature>
<feature type="unsure residue" description="N OR D" evidence="5">
    <location>
        <position position="24"/>
    </location>
</feature>
<feature type="unsure residue" description="N OR D" evidence="5">
    <location>
        <position position="26"/>
    </location>
</feature>
<feature type="unsure residue" description="I OR V" evidence="5">
    <location>
        <position position="60"/>
    </location>
</feature>
<feature type="unsure residue" description="N OR R" evidence="5">
    <location>
        <position position="71"/>
    </location>
</feature>
<feature type="unsure residue" description="T OR V" evidence="5">
    <location>
        <position position="173"/>
    </location>
</feature>
<feature type="unsure residue" description="Q OR E" evidence="5">
    <location>
        <position position="181"/>
    </location>
</feature>
<feature type="unsure residue" description="N OR D" evidence="5">
    <location>
        <position position="182"/>
    </location>
</feature>
<feature type="unsure residue" description="E OR Q" evidence="5">
    <location>
        <position position="183"/>
    </location>
</feature>
<feature type="unsure residue" description="Q OR E" evidence="5">
    <location>
        <position position="185"/>
    </location>
</feature>
<evidence type="ECO:0000255" key="1">
    <source>
        <dbReference type="PROSITE-ProRule" id="PRU00276"/>
    </source>
</evidence>
<evidence type="ECO:0000269" key="2">
    <source>
    </source>
</evidence>
<evidence type="ECO:0000303" key="3">
    <source>
    </source>
</evidence>
<evidence type="ECO:0000305" key="4"/>
<evidence type="ECO:0000305" key="5">
    <source>
    </source>
</evidence>
<evidence type="ECO:0007744" key="6">
    <source>
        <dbReference type="PDB" id="6X5X"/>
    </source>
</evidence>
<keyword id="KW-0002">3D-structure</keyword>
<keyword id="KW-0903">Direct protein sequencing</keyword>
<keyword id="KW-1015">Disulfide bond</keyword>
<keyword id="KW-0378">Hydrolase</keyword>
<keyword id="KW-0479">Metal-binding</keyword>
<keyword id="KW-0482">Metalloprotease</keyword>
<keyword id="KW-0645">Protease</keyword>
<keyword id="KW-0964">Secreted</keyword>
<keyword id="KW-0862">Zinc</keyword>
<accession>P0DQT6</accession>